<protein>
    <recommendedName>
        <fullName>Kallikrein-7</fullName>
        <ecNumber>3.4.21.117</ecNumber>
    </recommendedName>
    <alternativeName>
        <fullName>Serine protease 6</fullName>
    </alternativeName>
    <alternativeName>
        <fullName>Stratum corneum chymotryptic enzyme</fullName>
    </alternativeName>
    <alternativeName>
        <fullName>Thymopsin</fullName>
    </alternativeName>
</protein>
<name>KLK7_MOUSE</name>
<reference key="1">
    <citation type="submission" date="1997-10" db="EMBL/GenBank/DDBJ databases">
        <title>A novel cDNA cloning of mouse serine protease, thymopsin.</title>
        <authorList>
            <person name="Yamaguchi N."/>
        </authorList>
    </citation>
    <scope>NUCLEOTIDE SEQUENCE [MRNA]</scope>
    <source>
        <tissue>Thymus</tissue>
    </source>
</reference>
<reference key="2">
    <citation type="submission" date="2001-01" db="EMBL/GenBank/DDBJ databases">
        <title>Epidermal overexpression of stratum corneum chymotryptic enzyme in mice; a model for chronic ithchy dermatitis.</title>
        <authorList>
            <person name="Hansson L."/>
            <person name="Baeckman A."/>
            <person name="Ny A."/>
            <person name="Edlund M."/>
            <person name="Edholm E."/>
            <person name="Tornell J."/>
            <person name="Wallbrandt P."/>
            <person name="Egelrud T."/>
        </authorList>
    </citation>
    <scope>NUCLEOTIDE SEQUENCE [GENOMIC DNA]</scope>
    <source>
        <strain>129/SvJ</strain>
    </source>
</reference>
<reference key="3">
    <citation type="journal article" date="2005" name="Science">
        <title>The transcriptional landscape of the mammalian genome.</title>
        <authorList>
            <person name="Carninci P."/>
            <person name="Kasukawa T."/>
            <person name="Katayama S."/>
            <person name="Gough J."/>
            <person name="Frith M.C."/>
            <person name="Maeda N."/>
            <person name="Oyama R."/>
            <person name="Ravasi T."/>
            <person name="Lenhard B."/>
            <person name="Wells C."/>
            <person name="Kodzius R."/>
            <person name="Shimokawa K."/>
            <person name="Bajic V.B."/>
            <person name="Brenner S.E."/>
            <person name="Batalov S."/>
            <person name="Forrest A.R."/>
            <person name="Zavolan M."/>
            <person name="Davis M.J."/>
            <person name="Wilming L.G."/>
            <person name="Aidinis V."/>
            <person name="Allen J.E."/>
            <person name="Ambesi-Impiombato A."/>
            <person name="Apweiler R."/>
            <person name="Aturaliya R.N."/>
            <person name="Bailey T.L."/>
            <person name="Bansal M."/>
            <person name="Baxter L."/>
            <person name="Beisel K.W."/>
            <person name="Bersano T."/>
            <person name="Bono H."/>
            <person name="Chalk A.M."/>
            <person name="Chiu K.P."/>
            <person name="Choudhary V."/>
            <person name="Christoffels A."/>
            <person name="Clutterbuck D.R."/>
            <person name="Crowe M.L."/>
            <person name="Dalla E."/>
            <person name="Dalrymple B.P."/>
            <person name="de Bono B."/>
            <person name="Della Gatta G."/>
            <person name="di Bernardo D."/>
            <person name="Down T."/>
            <person name="Engstrom P."/>
            <person name="Fagiolini M."/>
            <person name="Faulkner G."/>
            <person name="Fletcher C.F."/>
            <person name="Fukushima T."/>
            <person name="Furuno M."/>
            <person name="Futaki S."/>
            <person name="Gariboldi M."/>
            <person name="Georgii-Hemming P."/>
            <person name="Gingeras T.R."/>
            <person name="Gojobori T."/>
            <person name="Green R.E."/>
            <person name="Gustincich S."/>
            <person name="Harbers M."/>
            <person name="Hayashi Y."/>
            <person name="Hensch T.K."/>
            <person name="Hirokawa N."/>
            <person name="Hill D."/>
            <person name="Huminiecki L."/>
            <person name="Iacono M."/>
            <person name="Ikeo K."/>
            <person name="Iwama A."/>
            <person name="Ishikawa T."/>
            <person name="Jakt M."/>
            <person name="Kanapin A."/>
            <person name="Katoh M."/>
            <person name="Kawasawa Y."/>
            <person name="Kelso J."/>
            <person name="Kitamura H."/>
            <person name="Kitano H."/>
            <person name="Kollias G."/>
            <person name="Krishnan S.P."/>
            <person name="Kruger A."/>
            <person name="Kummerfeld S.K."/>
            <person name="Kurochkin I.V."/>
            <person name="Lareau L.F."/>
            <person name="Lazarevic D."/>
            <person name="Lipovich L."/>
            <person name="Liu J."/>
            <person name="Liuni S."/>
            <person name="McWilliam S."/>
            <person name="Madan Babu M."/>
            <person name="Madera M."/>
            <person name="Marchionni L."/>
            <person name="Matsuda H."/>
            <person name="Matsuzawa S."/>
            <person name="Miki H."/>
            <person name="Mignone F."/>
            <person name="Miyake S."/>
            <person name="Morris K."/>
            <person name="Mottagui-Tabar S."/>
            <person name="Mulder N."/>
            <person name="Nakano N."/>
            <person name="Nakauchi H."/>
            <person name="Ng P."/>
            <person name="Nilsson R."/>
            <person name="Nishiguchi S."/>
            <person name="Nishikawa S."/>
            <person name="Nori F."/>
            <person name="Ohara O."/>
            <person name="Okazaki Y."/>
            <person name="Orlando V."/>
            <person name="Pang K.C."/>
            <person name="Pavan W.J."/>
            <person name="Pavesi G."/>
            <person name="Pesole G."/>
            <person name="Petrovsky N."/>
            <person name="Piazza S."/>
            <person name="Reed J."/>
            <person name="Reid J.F."/>
            <person name="Ring B.Z."/>
            <person name="Ringwald M."/>
            <person name="Rost B."/>
            <person name="Ruan Y."/>
            <person name="Salzberg S.L."/>
            <person name="Sandelin A."/>
            <person name="Schneider C."/>
            <person name="Schoenbach C."/>
            <person name="Sekiguchi K."/>
            <person name="Semple C.A."/>
            <person name="Seno S."/>
            <person name="Sessa L."/>
            <person name="Sheng Y."/>
            <person name="Shibata Y."/>
            <person name="Shimada H."/>
            <person name="Shimada K."/>
            <person name="Silva D."/>
            <person name="Sinclair B."/>
            <person name="Sperling S."/>
            <person name="Stupka E."/>
            <person name="Sugiura K."/>
            <person name="Sultana R."/>
            <person name="Takenaka Y."/>
            <person name="Taki K."/>
            <person name="Tammoja K."/>
            <person name="Tan S.L."/>
            <person name="Tang S."/>
            <person name="Taylor M.S."/>
            <person name="Tegner J."/>
            <person name="Teichmann S.A."/>
            <person name="Ueda H.R."/>
            <person name="van Nimwegen E."/>
            <person name="Verardo R."/>
            <person name="Wei C.L."/>
            <person name="Yagi K."/>
            <person name="Yamanishi H."/>
            <person name="Zabarovsky E."/>
            <person name="Zhu S."/>
            <person name="Zimmer A."/>
            <person name="Hide W."/>
            <person name="Bult C."/>
            <person name="Grimmond S.M."/>
            <person name="Teasdale R.D."/>
            <person name="Liu E.T."/>
            <person name="Brusic V."/>
            <person name="Quackenbush J."/>
            <person name="Wahlestedt C."/>
            <person name="Mattick J.S."/>
            <person name="Hume D.A."/>
            <person name="Kai C."/>
            <person name="Sasaki D."/>
            <person name="Tomaru Y."/>
            <person name="Fukuda S."/>
            <person name="Kanamori-Katayama M."/>
            <person name="Suzuki M."/>
            <person name="Aoki J."/>
            <person name="Arakawa T."/>
            <person name="Iida J."/>
            <person name="Imamura K."/>
            <person name="Itoh M."/>
            <person name="Kato T."/>
            <person name="Kawaji H."/>
            <person name="Kawagashira N."/>
            <person name="Kawashima T."/>
            <person name="Kojima M."/>
            <person name="Kondo S."/>
            <person name="Konno H."/>
            <person name="Nakano K."/>
            <person name="Ninomiya N."/>
            <person name="Nishio T."/>
            <person name="Okada M."/>
            <person name="Plessy C."/>
            <person name="Shibata K."/>
            <person name="Shiraki T."/>
            <person name="Suzuki S."/>
            <person name="Tagami M."/>
            <person name="Waki K."/>
            <person name="Watahiki A."/>
            <person name="Okamura-Oho Y."/>
            <person name="Suzuki H."/>
            <person name="Kawai J."/>
            <person name="Hayashizaki Y."/>
        </authorList>
    </citation>
    <scope>NUCLEOTIDE SEQUENCE [LARGE SCALE MRNA]</scope>
    <source>
        <strain>C57BL/6J</strain>
        <tissue>Head</tissue>
    </source>
</reference>
<reference key="4">
    <citation type="journal article" date="2004" name="Genome Res.">
        <title>The status, quality, and expansion of the NIH full-length cDNA project: the Mammalian Gene Collection (MGC).</title>
        <authorList>
            <consortium name="The MGC Project Team"/>
        </authorList>
    </citation>
    <scope>NUCLEOTIDE SEQUENCE [LARGE SCALE MRNA]</scope>
    <source>
        <strain>FVB/N</strain>
        <tissue>Mammary tumor</tissue>
    </source>
</reference>
<reference key="5">
    <citation type="journal article" date="1999" name="J. Invest. Dermatol.">
        <title>Molecular cloning and tissue expression of the murine analog to human stratum corneum chymotryptic enzyme.</title>
        <authorList>
            <person name="Baeckman A."/>
            <person name="Stranden P."/>
            <person name="Brattsand M."/>
            <person name="Hansson L."/>
            <person name="Egelrud T."/>
        </authorList>
    </citation>
    <scope>NUCLEOTIDE SEQUENCE [MRNA] OF 1-234</scope>
    <scope>TISSUE SPECIFICITY</scope>
    <source>
        <strain>C57BL/6J</strain>
        <tissue>Tail</tissue>
    </source>
</reference>
<evidence type="ECO:0000250" key="1"/>
<evidence type="ECO:0000255" key="2"/>
<evidence type="ECO:0000255" key="3">
    <source>
        <dbReference type="PROSITE-ProRule" id="PRU00274"/>
    </source>
</evidence>
<evidence type="ECO:0000269" key="4">
    <source>
    </source>
</evidence>
<evidence type="ECO:0000305" key="5"/>
<evidence type="ECO:0007829" key="6">
    <source>
        <dbReference type="PDB" id="6AHS"/>
    </source>
</evidence>
<keyword id="KW-0002">3D-structure</keyword>
<keyword id="KW-1015">Disulfide bond</keyword>
<keyword id="KW-0378">Hydrolase</keyword>
<keyword id="KW-0645">Protease</keyword>
<keyword id="KW-1185">Reference proteome</keyword>
<keyword id="KW-0964">Secreted</keyword>
<keyword id="KW-0720">Serine protease</keyword>
<keyword id="KW-0732">Signal</keyword>
<keyword id="KW-0865">Zymogen</keyword>
<gene>
    <name type="primary">Klk7</name>
    <name type="synonym">Prss6</name>
    <name type="synonym">Scce</name>
</gene>
<feature type="signal peptide" evidence="2">
    <location>
        <begin position="1"/>
        <end position="21"/>
    </location>
</feature>
<feature type="propeptide" id="PRO_0000027944" description="Activation peptide" evidence="1">
    <location>
        <begin position="22"/>
        <end position="25"/>
    </location>
</feature>
<feature type="chain" id="PRO_0000027945" description="Kallikrein-7" evidence="1">
    <location>
        <begin position="26"/>
        <end position="249"/>
    </location>
</feature>
<feature type="region of interest" description="Serine protease" evidence="1">
    <location>
        <begin position="26"/>
        <end position="246"/>
    </location>
</feature>
<feature type="active site" description="Charge relay system" evidence="1">
    <location>
        <position position="66"/>
    </location>
</feature>
<feature type="active site" description="Charge relay system" evidence="1">
    <location>
        <position position="108"/>
    </location>
</feature>
<feature type="active site" description="Charge relay system" evidence="1">
    <location>
        <position position="201"/>
    </location>
</feature>
<feature type="site" description="Major binding site for inhibitory zinc or copper" evidence="1">
    <location>
        <position position="105"/>
    </location>
</feature>
<feature type="disulfide bond" evidence="3">
    <location>
        <begin position="32"/>
        <end position="161"/>
    </location>
</feature>
<feature type="disulfide bond" evidence="3">
    <location>
        <begin position="51"/>
        <end position="67"/>
    </location>
</feature>
<feature type="disulfide bond" evidence="3">
    <location>
        <begin position="133"/>
        <end position="235"/>
    </location>
</feature>
<feature type="disulfide bond" evidence="3">
    <location>
        <begin position="140"/>
        <end position="207"/>
    </location>
</feature>
<feature type="disulfide bond" evidence="3">
    <location>
        <begin position="172"/>
        <end position="186"/>
    </location>
</feature>
<feature type="disulfide bond" evidence="3">
    <location>
        <begin position="197"/>
        <end position="222"/>
    </location>
</feature>
<feature type="sequence conflict" description="In Ref. 5; AAF01139." evidence="5" ref="5">
    <original>VSW</original>
    <variation>ASR</variation>
    <location>
        <begin position="215"/>
        <end position="217"/>
    </location>
</feature>
<feature type="strand" evidence="6">
    <location>
        <begin position="40"/>
        <end position="45"/>
    </location>
</feature>
<feature type="strand" evidence="6">
    <location>
        <begin position="48"/>
        <end position="57"/>
    </location>
</feature>
<feature type="strand" evidence="6">
    <location>
        <begin position="60"/>
        <end position="63"/>
    </location>
</feature>
<feature type="helix" evidence="6">
    <location>
        <begin position="65"/>
        <end position="67"/>
    </location>
</feature>
<feature type="strand" evidence="6">
    <location>
        <begin position="72"/>
        <end position="77"/>
    </location>
</feature>
<feature type="strand" evidence="6">
    <location>
        <begin position="86"/>
        <end position="96"/>
    </location>
</feature>
<feature type="turn" evidence="6">
    <location>
        <begin position="102"/>
        <end position="104"/>
    </location>
</feature>
<feature type="strand" evidence="6">
    <location>
        <begin position="110"/>
        <end position="116"/>
    </location>
</feature>
<feature type="strand" evidence="6">
    <location>
        <begin position="139"/>
        <end position="146"/>
    </location>
</feature>
<feature type="strand" evidence="6">
    <location>
        <begin position="148"/>
        <end position="152"/>
    </location>
</feature>
<feature type="strand" evidence="6">
    <location>
        <begin position="160"/>
        <end position="167"/>
    </location>
</feature>
<feature type="helix" evidence="6">
    <location>
        <begin position="169"/>
        <end position="176"/>
    </location>
</feature>
<feature type="helix" evidence="6">
    <location>
        <begin position="177"/>
        <end position="179"/>
    </location>
</feature>
<feature type="strand" evidence="6">
    <location>
        <begin position="184"/>
        <end position="188"/>
    </location>
</feature>
<feature type="strand" evidence="6">
    <location>
        <begin position="204"/>
        <end position="207"/>
    </location>
</feature>
<feature type="strand" evidence="6">
    <location>
        <begin position="210"/>
        <end position="217"/>
    </location>
</feature>
<feature type="strand" evidence="6">
    <location>
        <begin position="220"/>
        <end position="222"/>
    </location>
</feature>
<feature type="strand" evidence="6">
    <location>
        <begin position="229"/>
        <end position="233"/>
    </location>
</feature>
<feature type="helix" evidence="6">
    <location>
        <begin position="234"/>
        <end position="237"/>
    </location>
</feature>
<feature type="helix" evidence="6">
    <location>
        <begin position="238"/>
        <end position="244"/>
    </location>
</feature>
<accession>Q91VE3</accession>
<accession>Q9R048</accession>
<proteinExistence type="evidence at protein level"/>
<dbReference type="EC" id="3.4.21.117"/>
<dbReference type="EMBL" id="AB008371">
    <property type="protein sequence ID" value="BAB55604.1"/>
    <property type="molecule type" value="mRNA"/>
</dbReference>
<dbReference type="EMBL" id="AF339930">
    <property type="protein sequence ID" value="AAK69652.1"/>
    <property type="molecule type" value="Genomic_DNA"/>
</dbReference>
<dbReference type="EMBL" id="AK029477">
    <property type="protein sequence ID" value="BAC26467.1"/>
    <property type="molecule type" value="mRNA"/>
</dbReference>
<dbReference type="EMBL" id="AK077406">
    <property type="protein sequence ID" value="BAC36787.1"/>
    <property type="molecule type" value="mRNA"/>
</dbReference>
<dbReference type="EMBL" id="BC027823">
    <property type="protein sequence ID" value="AAH27823.1"/>
    <property type="molecule type" value="mRNA"/>
</dbReference>
<dbReference type="EMBL" id="AF124299">
    <property type="protein sequence ID" value="AAF01139.1"/>
    <property type="molecule type" value="mRNA"/>
</dbReference>
<dbReference type="CCDS" id="CCDS21183.1"/>
<dbReference type="RefSeq" id="NP_036002.1">
    <property type="nucleotide sequence ID" value="NM_011872.3"/>
</dbReference>
<dbReference type="PDB" id="5ZFH">
    <property type="method" value="X-ray"/>
    <property type="resolution" value="1.93 A"/>
    <property type="chains" value="A=26-249"/>
</dbReference>
<dbReference type="PDB" id="5ZFI">
    <property type="method" value="X-ray"/>
    <property type="resolution" value="1.80 A"/>
    <property type="chains" value="A=26-249"/>
</dbReference>
<dbReference type="PDB" id="6AHS">
    <property type="method" value="X-ray"/>
    <property type="resolution" value="1.75 A"/>
    <property type="chains" value="A=26-249"/>
</dbReference>
<dbReference type="PDBsum" id="5ZFH"/>
<dbReference type="PDBsum" id="5ZFI"/>
<dbReference type="PDBsum" id="6AHS"/>
<dbReference type="SMR" id="Q91VE3"/>
<dbReference type="FunCoup" id="Q91VE3">
    <property type="interactions" value="90"/>
</dbReference>
<dbReference type="STRING" id="10090.ENSMUSP00000032955"/>
<dbReference type="BindingDB" id="Q91VE3"/>
<dbReference type="ChEMBL" id="CHEMBL4295910"/>
<dbReference type="MEROPS" id="S01.300"/>
<dbReference type="PhosphoSitePlus" id="Q91VE3"/>
<dbReference type="jPOST" id="Q91VE3"/>
<dbReference type="PaxDb" id="10090-ENSMUSP00000032955"/>
<dbReference type="ProteomicsDB" id="264853"/>
<dbReference type="Antibodypedia" id="18939">
    <property type="antibodies" value="421 antibodies from 33 providers"/>
</dbReference>
<dbReference type="DNASU" id="23993"/>
<dbReference type="Ensembl" id="ENSMUST00000032955.7">
    <property type="protein sequence ID" value="ENSMUSP00000032955.6"/>
    <property type="gene ID" value="ENSMUSG00000030713.7"/>
</dbReference>
<dbReference type="GeneID" id="23993"/>
<dbReference type="KEGG" id="mmu:23993"/>
<dbReference type="UCSC" id="uc009gnt.1">
    <property type="organism name" value="mouse"/>
</dbReference>
<dbReference type="AGR" id="MGI:1346336"/>
<dbReference type="CTD" id="5650"/>
<dbReference type="MGI" id="MGI:1346336">
    <property type="gene designation" value="Klk7"/>
</dbReference>
<dbReference type="VEuPathDB" id="HostDB:ENSMUSG00000030713"/>
<dbReference type="eggNOG" id="KOG3627">
    <property type="taxonomic scope" value="Eukaryota"/>
</dbReference>
<dbReference type="GeneTree" id="ENSGT01020000230389"/>
<dbReference type="HOGENOM" id="CLU_006842_7_0_1"/>
<dbReference type="InParanoid" id="Q91VE3"/>
<dbReference type="OMA" id="QECSKVY"/>
<dbReference type="OrthoDB" id="10061449at2759"/>
<dbReference type="PhylomeDB" id="Q91VE3"/>
<dbReference type="TreeFam" id="TF331065"/>
<dbReference type="BRENDA" id="3.4.21.117">
    <property type="organism ID" value="3474"/>
</dbReference>
<dbReference type="Reactome" id="R-MMU-1474228">
    <property type="pathway name" value="Degradation of the extracellular matrix"/>
</dbReference>
<dbReference type="BioGRID-ORCS" id="23993">
    <property type="hits" value="1 hit in 77 CRISPR screens"/>
</dbReference>
<dbReference type="PRO" id="PR:Q91VE3"/>
<dbReference type="Proteomes" id="UP000000589">
    <property type="component" value="Chromosome 7"/>
</dbReference>
<dbReference type="RNAct" id="Q91VE3">
    <property type="molecule type" value="protein"/>
</dbReference>
<dbReference type="Bgee" id="ENSMUSG00000030713">
    <property type="expression patterns" value="Expressed in tail skin and 51 other cell types or tissues"/>
</dbReference>
<dbReference type="ExpressionAtlas" id="Q91VE3">
    <property type="expression patterns" value="baseline and differential"/>
</dbReference>
<dbReference type="GO" id="GO:0001533">
    <property type="term" value="C:cornified envelope"/>
    <property type="evidence" value="ECO:0000314"/>
    <property type="project" value="MGI"/>
</dbReference>
<dbReference type="GO" id="GO:0097209">
    <property type="term" value="C:epidermal lamellar body"/>
    <property type="evidence" value="ECO:0007669"/>
    <property type="project" value="Ensembl"/>
</dbReference>
<dbReference type="GO" id="GO:0005615">
    <property type="term" value="C:extracellular space"/>
    <property type="evidence" value="ECO:0007669"/>
    <property type="project" value="Ensembl"/>
</dbReference>
<dbReference type="GO" id="GO:0004252">
    <property type="term" value="F:serine-type endopeptidase activity"/>
    <property type="evidence" value="ECO:0007669"/>
    <property type="project" value="InterPro"/>
</dbReference>
<dbReference type="GO" id="GO:0002803">
    <property type="term" value="P:positive regulation of antibacterial peptide production"/>
    <property type="evidence" value="ECO:0007669"/>
    <property type="project" value="Ensembl"/>
</dbReference>
<dbReference type="GO" id="GO:0006508">
    <property type="term" value="P:proteolysis"/>
    <property type="evidence" value="ECO:0007669"/>
    <property type="project" value="UniProtKB-KW"/>
</dbReference>
<dbReference type="CDD" id="cd00190">
    <property type="entry name" value="Tryp_SPc"/>
    <property type="match status" value="1"/>
</dbReference>
<dbReference type="FunFam" id="2.40.10.10:FF:000021">
    <property type="entry name" value="Kallikrein 1"/>
    <property type="match status" value="1"/>
</dbReference>
<dbReference type="FunFam" id="2.40.10.10:FF:000010">
    <property type="entry name" value="Kallikrein related peptidase 11"/>
    <property type="match status" value="1"/>
</dbReference>
<dbReference type="Gene3D" id="2.40.10.10">
    <property type="entry name" value="Trypsin-like serine proteases"/>
    <property type="match status" value="2"/>
</dbReference>
<dbReference type="InterPro" id="IPR009003">
    <property type="entry name" value="Peptidase_S1_PA"/>
</dbReference>
<dbReference type="InterPro" id="IPR043504">
    <property type="entry name" value="Peptidase_S1_PA_chymotrypsin"/>
</dbReference>
<dbReference type="InterPro" id="IPR001314">
    <property type="entry name" value="Peptidase_S1A"/>
</dbReference>
<dbReference type="InterPro" id="IPR001254">
    <property type="entry name" value="Trypsin_dom"/>
</dbReference>
<dbReference type="InterPro" id="IPR018114">
    <property type="entry name" value="TRYPSIN_HIS"/>
</dbReference>
<dbReference type="InterPro" id="IPR033116">
    <property type="entry name" value="TRYPSIN_SER"/>
</dbReference>
<dbReference type="PANTHER" id="PTHR24271:SF45">
    <property type="entry name" value="KALLIKREIN-7"/>
    <property type="match status" value="1"/>
</dbReference>
<dbReference type="PANTHER" id="PTHR24271">
    <property type="entry name" value="KALLIKREIN-RELATED"/>
    <property type="match status" value="1"/>
</dbReference>
<dbReference type="Pfam" id="PF00089">
    <property type="entry name" value="Trypsin"/>
    <property type="match status" value="1"/>
</dbReference>
<dbReference type="PRINTS" id="PR00722">
    <property type="entry name" value="CHYMOTRYPSIN"/>
</dbReference>
<dbReference type="SMART" id="SM00020">
    <property type="entry name" value="Tryp_SPc"/>
    <property type="match status" value="1"/>
</dbReference>
<dbReference type="SUPFAM" id="SSF50494">
    <property type="entry name" value="Trypsin-like serine proteases"/>
    <property type="match status" value="1"/>
</dbReference>
<dbReference type="PROSITE" id="PS50240">
    <property type="entry name" value="TRYPSIN_DOM"/>
    <property type="match status" value="1"/>
</dbReference>
<dbReference type="PROSITE" id="PS00134">
    <property type="entry name" value="TRYPSIN_HIS"/>
    <property type="match status" value="1"/>
</dbReference>
<dbReference type="PROSITE" id="PS00135">
    <property type="entry name" value="TRYPSIN_SER"/>
    <property type="match status" value="1"/>
</dbReference>
<comment type="function">
    <text>May catalyze the degradation of intercellular cohesive structures in the cornified layer of the skin in the continuous shedding of cells from the skin surface. Specific for amino acid residues with aromatic side chains in the P1 position. Cleaves insulin A chain at '14-Tyr-|-Gln-15' and insulin B chain at '6-Leu-|-Cys-7', '16-Tyr-|-Leu-17', '25-Phe-|-Tyr-26' and '26-Tyr-|-Thr-27'. Could play a role in the activation of precursors to inflammatory cytokines.</text>
</comment>
<comment type="catalytic activity">
    <reaction>
        <text>Cleavage of proteins with aromatic side chains in the P1 position.</text>
        <dbReference type="EC" id="3.4.21.117"/>
    </reaction>
</comment>
<comment type="activity regulation">
    <text evidence="1">Inhibited by Zn2+ and Cu2+ at low micromolar concentrations. Inhibited by SERPINA12 (By similarity).</text>
</comment>
<comment type="subcellular location">
    <subcellularLocation>
        <location evidence="1">Secreted</location>
    </subcellularLocation>
</comment>
<comment type="tissue specificity">
    <text evidence="4">Expressed in skin and, at lower levels, in lung, kidney, brain, heart and spleen. In skin, expressed in high suprabasal keratinocytes and in the luminal parts of hair follicles. Not detected in liver and skeletal muscle.</text>
</comment>
<comment type="similarity">
    <text evidence="3">Belongs to the peptidase S1 family. Kallikrein subfamily.</text>
</comment>
<organism>
    <name type="scientific">Mus musculus</name>
    <name type="common">Mouse</name>
    <dbReference type="NCBI Taxonomy" id="10090"/>
    <lineage>
        <taxon>Eukaryota</taxon>
        <taxon>Metazoa</taxon>
        <taxon>Chordata</taxon>
        <taxon>Craniata</taxon>
        <taxon>Vertebrata</taxon>
        <taxon>Euteleostomi</taxon>
        <taxon>Mammalia</taxon>
        <taxon>Eutheria</taxon>
        <taxon>Euarchontoglires</taxon>
        <taxon>Glires</taxon>
        <taxon>Rodentia</taxon>
        <taxon>Myomorpha</taxon>
        <taxon>Muroidea</taxon>
        <taxon>Muridae</taxon>
        <taxon>Murinae</taxon>
        <taxon>Mus</taxon>
        <taxon>Mus</taxon>
    </lineage>
</organism>
<sequence>MGVWLLSLITVLLSLALETAGQGERIIDGYKCKEGSHPWQVALLKGNQLHCGGVLVDKYWVLTAAHCKMGQYQVQLGSDKIGDQSAQKIKATKSFRHPGYSTKTHVNDIMLVRLDEPVKMSSKVEAVQLPEHCEPPGTSCTVSGWGTTTSPDVTFPSDLMCSDVKLISSRECKKVYKDLLGKTMLCAGIPDSKTNTCNGDSGGPLVCNDTLQGLVSWGTYPCGQPNDPGVYTQVCKYKRWVMETMKTHR</sequence>